<keyword id="KW-0002">3D-structure</keyword>
<keyword id="KW-0007">Acetylation</keyword>
<keyword id="KW-0040">ANK repeat</keyword>
<keyword id="KW-0131">Cell cycle</keyword>
<keyword id="KW-0963">Cytoplasm</keyword>
<keyword id="KW-0539">Nucleus</keyword>
<keyword id="KW-1185">Reference proteome</keyword>
<keyword id="KW-0677">Repeat</keyword>
<keyword id="KW-0043">Tumor suppressor</keyword>
<dbReference type="EMBL" id="U19597">
    <property type="protein sequence ID" value="AAC52194.1"/>
    <property type="molecule type" value="mRNA"/>
</dbReference>
<dbReference type="EMBL" id="U20497">
    <property type="protein sequence ID" value="AAA85437.1"/>
    <property type="molecule type" value="mRNA"/>
</dbReference>
<dbReference type="EMBL" id="AK132906">
    <property type="protein sequence ID" value="BAE21414.1"/>
    <property type="molecule type" value="mRNA"/>
</dbReference>
<dbReference type="EMBL" id="AC122525">
    <property type="status" value="NOT_ANNOTATED_CDS"/>
    <property type="molecule type" value="Genomic_DNA"/>
</dbReference>
<dbReference type="EMBL" id="CH466522">
    <property type="protein sequence ID" value="EDL25176.1"/>
    <property type="molecule type" value="Genomic_DNA"/>
</dbReference>
<dbReference type="EMBL" id="BC013898">
    <property type="protein sequence ID" value="AAH13898.1"/>
    <property type="molecule type" value="mRNA"/>
</dbReference>
<dbReference type="CCDS" id="CCDS22901.1"/>
<dbReference type="PIR" id="A57379">
    <property type="entry name" value="A57379"/>
</dbReference>
<dbReference type="PIR" id="B57378">
    <property type="entry name" value="B57378"/>
</dbReference>
<dbReference type="RefSeq" id="NP_001396593.1">
    <property type="nucleotide sequence ID" value="NM_001409664.1"/>
</dbReference>
<dbReference type="RefSeq" id="NP_034008.2">
    <property type="nucleotide sequence ID" value="NM_009878.3"/>
</dbReference>
<dbReference type="RefSeq" id="XP_006510031.1">
    <property type="nucleotide sequence ID" value="XM_006509968.1"/>
</dbReference>
<dbReference type="PDB" id="1AP7">
    <property type="method" value="NMR"/>
    <property type="chains" value="A=1-166"/>
</dbReference>
<dbReference type="PDB" id="1BLX">
    <property type="method" value="X-ray"/>
    <property type="resolution" value="1.90 A"/>
    <property type="chains" value="B=1-166"/>
</dbReference>
<dbReference type="PDBsum" id="1AP7"/>
<dbReference type="PDBsum" id="1BLX"/>
<dbReference type="SMR" id="Q60773"/>
<dbReference type="BioGRID" id="198657">
    <property type="interactions" value="2"/>
</dbReference>
<dbReference type="CORUM" id="Q60773"/>
<dbReference type="FunCoup" id="Q60773">
    <property type="interactions" value="1236"/>
</dbReference>
<dbReference type="IntAct" id="Q60773">
    <property type="interactions" value="1"/>
</dbReference>
<dbReference type="STRING" id="10090.ENSMUSP00000150701"/>
<dbReference type="PhosphoSitePlus" id="Q60773"/>
<dbReference type="PaxDb" id="10090-ENSMUSP00000083561"/>
<dbReference type="ProteomicsDB" id="283868"/>
<dbReference type="Pumba" id="Q60773"/>
<dbReference type="Antibodypedia" id="4404">
    <property type="antibodies" value="296 antibodies from 34 providers"/>
</dbReference>
<dbReference type="DNASU" id="12581"/>
<dbReference type="Ensembl" id="ENSMUST00000215619.2">
    <property type="protein sequence ID" value="ENSMUSP00000150701.2"/>
    <property type="gene ID" value="ENSMUSG00000096472.3"/>
</dbReference>
<dbReference type="GeneID" id="12581"/>
<dbReference type="KEGG" id="mmu:12581"/>
<dbReference type="UCSC" id="uc009okw.1">
    <property type="organism name" value="mouse"/>
</dbReference>
<dbReference type="AGR" id="MGI:105387"/>
<dbReference type="CTD" id="1032"/>
<dbReference type="MGI" id="MGI:105387">
    <property type="gene designation" value="Cdkn2d"/>
</dbReference>
<dbReference type="VEuPathDB" id="HostDB:ENSMUSG00000096472"/>
<dbReference type="eggNOG" id="KOG0504">
    <property type="taxonomic scope" value="Eukaryota"/>
</dbReference>
<dbReference type="GeneTree" id="ENSGT00940000159801"/>
<dbReference type="HOGENOM" id="CLU_000134_37_0_1"/>
<dbReference type="InParanoid" id="Q60773"/>
<dbReference type="OMA" id="HTDVVCF"/>
<dbReference type="OrthoDB" id="21416at2759"/>
<dbReference type="PhylomeDB" id="Q60773"/>
<dbReference type="TreeFam" id="TF333311"/>
<dbReference type="BioGRID-ORCS" id="12581">
    <property type="hits" value="1 hit in 118 CRISPR screens"/>
</dbReference>
<dbReference type="EvolutionaryTrace" id="Q60773"/>
<dbReference type="PRO" id="PR:Q60773"/>
<dbReference type="Proteomes" id="UP000000589">
    <property type="component" value="Chromosome 9"/>
</dbReference>
<dbReference type="RNAct" id="Q60773">
    <property type="molecule type" value="protein"/>
</dbReference>
<dbReference type="Bgee" id="ENSMUSG00000096472">
    <property type="expression patterns" value="Expressed in granulocyte and 261 other cell types or tissues"/>
</dbReference>
<dbReference type="ExpressionAtlas" id="Q60773">
    <property type="expression patterns" value="baseline and differential"/>
</dbReference>
<dbReference type="GO" id="GO:0097129">
    <property type="term" value="C:cyclin D2-CDK4 complex"/>
    <property type="evidence" value="ECO:0000314"/>
    <property type="project" value="MGI"/>
</dbReference>
<dbReference type="GO" id="GO:0005829">
    <property type="term" value="C:cytosol"/>
    <property type="evidence" value="ECO:0007669"/>
    <property type="project" value="Ensembl"/>
</dbReference>
<dbReference type="GO" id="GO:0005654">
    <property type="term" value="C:nucleoplasm"/>
    <property type="evidence" value="ECO:0007669"/>
    <property type="project" value="Ensembl"/>
</dbReference>
<dbReference type="GO" id="GO:0004861">
    <property type="term" value="F:cyclin-dependent protein serine/threonine kinase inhibitor activity"/>
    <property type="evidence" value="ECO:0007669"/>
    <property type="project" value="Ensembl"/>
</dbReference>
<dbReference type="GO" id="GO:0019901">
    <property type="term" value="F:protein kinase binding"/>
    <property type="evidence" value="ECO:0000353"/>
    <property type="project" value="MGI"/>
</dbReference>
<dbReference type="GO" id="GO:0048102">
    <property type="term" value="P:autophagic cell death"/>
    <property type="evidence" value="ECO:0007669"/>
    <property type="project" value="Ensembl"/>
</dbReference>
<dbReference type="GO" id="GO:0000731">
    <property type="term" value="P:DNA synthesis involved in DNA repair"/>
    <property type="evidence" value="ECO:0007669"/>
    <property type="project" value="Ensembl"/>
</dbReference>
<dbReference type="GO" id="GO:1902807">
    <property type="term" value="P:negative regulation of cell cycle G1/S phase transition"/>
    <property type="evidence" value="ECO:0000314"/>
    <property type="project" value="MGI"/>
</dbReference>
<dbReference type="GO" id="GO:0030308">
    <property type="term" value="P:negative regulation of cell growth"/>
    <property type="evidence" value="ECO:0007669"/>
    <property type="project" value="Ensembl"/>
</dbReference>
<dbReference type="GO" id="GO:0008285">
    <property type="term" value="P:negative regulation of cell population proliferation"/>
    <property type="evidence" value="ECO:0007669"/>
    <property type="project" value="Ensembl"/>
</dbReference>
<dbReference type="GO" id="GO:1902230">
    <property type="term" value="P:negative regulation of intrinsic apoptotic signaling pathway in response to DNA damage"/>
    <property type="evidence" value="ECO:0007669"/>
    <property type="project" value="Ensembl"/>
</dbReference>
<dbReference type="GO" id="GO:2000045">
    <property type="term" value="P:regulation of G1/S transition of mitotic cell cycle"/>
    <property type="evidence" value="ECO:0007669"/>
    <property type="project" value="Ensembl"/>
</dbReference>
<dbReference type="GO" id="GO:0032526">
    <property type="term" value="P:response to retinoic acid"/>
    <property type="evidence" value="ECO:0007669"/>
    <property type="project" value="Ensembl"/>
</dbReference>
<dbReference type="GO" id="GO:0009411">
    <property type="term" value="P:response to UV"/>
    <property type="evidence" value="ECO:0007669"/>
    <property type="project" value="Ensembl"/>
</dbReference>
<dbReference type="GO" id="GO:0033280">
    <property type="term" value="P:response to vitamin D"/>
    <property type="evidence" value="ECO:0007669"/>
    <property type="project" value="Ensembl"/>
</dbReference>
<dbReference type="GO" id="GO:0007605">
    <property type="term" value="P:sensory perception of sound"/>
    <property type="evidence" value="ECO:0000315"/>
    <property type="project" value="MGI"/>
</dbReference>
<dbReference type="FunFam" id="1.25.40.20:FF:000169">
    <property type="entry name" value="Cyclin-dependent kinase 4 inhibitor D"/>
    <property type="match status" value="1"/>
</dbReference>
<dbReference type="Gene3D" id="1.25.40.20">
    <property type="entry name" value="Ankyrin repeat-containing domain"/>
    <property type="match status" value="1"/>
</dbReference>
<dbReference type="InterPro" id="IPR050776">
    <property type="entry name" value="Ank_Repeat/CDKN_Inhibitor"/>
</dbReference>
<dbReference type="InterPro" id="IPR002110">
    <property type="entry name" value="Ankyrin_rpt"/>
</dbReference>
<dbReference type="InterPro" id="IPR036770">
    <property type="entry name" value="Ankyrin_rpt-contain_sf"/>
</dbReference>
<dbReference type="PANTHER" id="PTHR24201">
    <property type="entry name" value="ANK_REP_REGION DOMAIN-CONTAINING PROTEIN"/>
    <property type="match status" value="1"/>
</dbReference>
<dbReference type="PANTHER" id="PTHR24201:SF7">
    <property type="entry name" value="CYCLIN-DEPENDENT KINASE 4 INHIBITOR D"/>
    <property type="match status" value="1"/>
</dbReference>
<dbReference type="Pfam" id="PF00023">
    <property type="entry name" value="Ank"/>
    <property type="match status" value="1"/>
</dbReference>
<dbReference type="Pfam" id="PF12796">
    <property type="entry name" value="Ank_2"/>
    <property type="match status" value="1"/>
</dbReference>
<dbReference type="SMART" id="SM00248">
    <property type="entry name" value="ANK"/>
    <property type="match status" value="3"/>
</dbReference>
<dbReference type="SUPFAM" id="SSF48403">
    <property type="entry name" value="Ankyrin repeat"/>
    <property type="match status" value="1"/>
</dbReference>
<dbReference type="PROSITE" id="PS50297">
    <property type="entry name" value="ANK_REP_REGION"/>
    <property type="match status" value="1"/>
</dbReference>
<dbReference type="PROSITE" id="PS50088">
    <property type="entry name" value="ANK_REPEAT"/>
    <property type="match status" value="1"/>
</dbReference>
<comment type="function">
    <text evidence="3 4">Interacts strongly with CDK4 and CDK6 and inhibits them.</text>
</comment>
<comment type="subunit">
    <text evidence="1">Interacts with CDK6.</text>
</comment>
<comment type="subcellular location">
    <subcellularLocation>
        <location evidence="1">Nucleus</location>
    </subcellularLocation>
    <subcellularLocation>
        <location evidence="1">Cytoplasm</location>
    </subcellularLocation>
</comment>
<comment type="similarity">
    <text evidence="5">Belongs to the CDKN2 cyclin-dependent kinase inhibitor family.</text>
</comment>
<sequence>MLLEEVCVGDRLSGAAARGDVQEVRRLLHRELVHPDALNRFGKTALQVMMFGSPAVALELLKQGASPNVQDASGTSPVHDAARTGFLDTLKVLVEHGADVNALDSTGSLPIHLAIREGHSSVVSFLAPESDLHHRDASGLTPLELARQRGAQNLMDILQGHMMIPM</sequence>
<name>CDN2D_MOUSE</name>
<accession>Q60773</accession>
<accession>Q60794</accession>
<accession>Q91YV3</accession>
<feature type="chain" id="PRO_0000144189" description="Cyclin-dependent kinase 4 inhibitor D">
    <location>
        <begin position="1"/>
        <end position="166"/>
    </location>
</feature>
<feature type="repeat" description="ANK 1">
    <location>
        <begin position="41"/>
        <end position="69"/>
    </location>
</feature>
<feature type="repeat" description="ANK 2">
    <location>
        <begin position="73"/>
        <end position="102"/>
    </location>
</feature>
<feature type="repeat" description="ANK 3">
    <location>
        <begin position="106"/>
        <end position="135"/>
    </location>
</feature>
<feature type="repeat" description="ANK 4">
    <location>
        <begin position="138"/>
        <end position="165"/>
    </location>
</feature>
<feature type="modified residue" description="N-acetylmethionine" evidence="2">
    <location>
        <position position="1"/>
    </location>
</feature>
<feature type="sequence conflict" description="In Ref. 1; AAC52194." evidence="5" ref="1">
    <original>A</original>
    <variation>R</variation>
    <location>
        <position position="16"/>
    </location>
</feature>
<feature type="sequence conflict" description="In Ref. 2; AAA85437." evidence="5" ref="2">
    <original>A</original>
    <variation>P</variation>
    <location>
        <position position="17"/>
    </location>
</feature>
<feature type="helix" evidence="7">
    <location>
        <begin position="7"/>
        <end position="17"/>
    </location>
</feature>
<feature type="helix" evidence="7">
    <location>
        <begin position="21"/>
        <end position="29"/>
    </location>
</feature>
<feature type="helix" evidence="7">
    <location>
        <begin position="45"/>
        <end position="48"/>
    </location>
</feature>
<feature type="helix" evidence="7">
    <location>
        <begin position="54"/>
        <end position="62"/>
    </location>
</feature>
<feature type="turn" evidence="6">
    <location>
        <begin position="72"/>
        <end position="74"/>
    </location>
</feature>
<feature type="helix" evidence="7">
    <location>
        <begin position="77"/>
        <end position="84"/>
    </location>
</feature>
<feature type="helix" evidence="7">
    <location>
        <begin position="87"/>
        <end position="95"/>
    </location>
</feature>
<feature type="helix" evidence="7">
    <location>
        <begin position="110"/>
        <end position="117"/>
    </location>
</feature>
<feature type="helix" evidence="7">
    <location>
        <begin position="120"/>
        <end position="126"/>
    </location>
</feature>
<feature type="helix" evidence="7">
    <location>
        <begin position="127"/>
        <end position="129"/>
    </location>
</feature>
<feature type="helix" evidence="7">
    <location>
        <begin position="142"/>
        <end position="148"/>
    </location>
</feature>
<feature type="helix" evidence="7">
    <location>
        <begin position="152"/>
        <end position="160"/>
    </location>
</feature>
<evidence type="ECO:0000250" key="1"/>
<evidence type="ECO:0000250" key="2">
    <source>
        <dbReference type="UniProtKB" id="P55273"/>
    </source>
</evidence>
<evidence type="ECO:0000269" key="3">
    <source>
    </source>
</evidence>
<evidence type="ECO:0000269" key="4">
    <source>
    </source>
</evidence>
<evidence type="ECO:0000305" key="5"/>
<evidence type="ECO:0007829" key="6">
    <source>
        <dbReference type="PDB" id="1AP7"/>
    </source>
</evidence>
<evidence type="ECO:0007829" key="7">
    <source>
        <dbReference type="PDB" id="1BLX"/>
    </source>
</evidence>
<reference key="1">
    <citation type="journal article" date="1995" name="Mol. Cell. Biol.">
        <title>Novel INK4 proteins, p19 and p18, are specific inhibitors of the cyclin D-dependent kinases CDK4 and CDK6.</title>
        <authorList>
            <person name="Hirai H."/>
            <person name="Roussel M.F."/>
            <person name="Kato J.-Y."/>
            <person name="Ashmun R.A."/>
            <person name="Sherr C.J."/>
        </authorList>
    </citation>
    <scope>NUCLEOTIDE SEQUENCE [MRNA]</scope>
    <scope>FUNCTION</scope>
    <source>
        <strain>C57BL/Kaplan</strain>
    </source>
</reference>
<reference key="2">
    <citation type="journal article" date="1995" name="Mol. Cell. Biol.">
        <title>Identification of human and mouse p19, a novel CDK4 and CDK6 inhibitor with homology to p16ink4.</title>
        <authorList>
            <person name="Chan F.K.M."/>
            <person name="Zhang J."/>
            <person name="Cheng L."/>
            <person name="Shapiro D.N."/>
            <person name="Winoto A."/>
        </authorList>
    </citation>
    <scope>NUCLEOTIDE SEQUENCE [MRNA]</scope>
    <scope>FUNCTION</scope>
</reference>
<reference key="3">
    <citation type="journal article" date="2005" name="Science">
        <title>The transcriptional landscape of the mammalian genome.</title>
        <authorList>
            <person name="Carninci P."/>
            <person name="Kasukawa T."/>
            <person name="Katayama S."/>
            <person name="Gough J."/>
            <person name="Frith M.C."/>
            <person name="Maeda N."/>
            <person name="Oyama R."/>
            <person name="Ravasi T."/>
            <person name="Lenhard B."/>
            <person name="Wells C."/>
            <person name="Kodzius R."/>
            <person name="Shimokawa K."/>
            <person name="Bajic V.B."/>
            <person name="Brenner S.E."/>
            <person name="Batalov S."/>
            <person name="Forrest A.R."/>
            <person name="Zavolan M."/>
            <person name="Davis M.J."/>
            <person name="Wilming L.G."/>
            <person name="Aidinis V."/>
            <person name="Allen J.E."/>
            <person name="Ambesi-Impiombato A."/>
            <person name="Apweiler R."/>
            <person name="Aturaliya R.N."/>
            <person name="Bailey T.L."/>
            <person name="Bansal M."/>
            <person name="Baxter L."/>
            <person name="Beisel K.W."/>
            <person name="Bersano T."/>
            <person name="Bono H."/>
            <person name="Chalk A.M."/>
            <person name="Chiu K.P."/>
            <person name="Choudhary V."/>
            <person name="Christoffels A."/>
            <person name="Clutterbuck D.R."/>
            <person name="Crowe M.L."/>
            <person name="Dalla E."/>
            <person name="Dalrymple B.P."/>
            <person name="de Bono B."/>
            <person name="Della Gatta G."/>
            <person name="di Bernardo D."/>
            <person name="Down T."/>
            <person name="Engstrom P."/>
            <person name="Fagiolini M."/>
            <person name="Faulkner G."/>
            <person name="Fletcher C.F."/>
            <person name="Fukushima T."/>
            <person name="Furuno M."/>
            <person name="Futaki S."/>
            <person name="Gariboldi M."/>
            <person name="Georgii-Hemming P."/>
            <person name="Gingeras T.R."/>
            <person name="Gojobori T."/>
            <person name="Green R.E."/>
            <person name="Gustincich S."/>
            <person name="Harbers M."/>
            <person name="Hayashi Y."/>
            <person name="Hensch T.K."/>
            <person name="Hirokawa N."/>
            <person name="Hill D."/>
            <person name="Huminiecki L."/>
            <person name="Iacono M."/>
            <person name="Ikeo K."/>
            <person name="Iwama A."/>
            <person name="Ishikawa T."/>
            <person name="Jakt M."/>
            <person name="Kanapin A."/>
            <person name="Katoh M."/>
            <person name="Kawasawa Y."/>
            <person name="Kelso J."/>
            <person name="Kitamura H."/>
            <person name="Kitano H."/>
            <person name="Kollias G."/>
            <person name="Krishnan S.P."/>
            <person name="Kruger A."/>
            <person name="Kummerfeld S.K."/>
            <person name="Kurochkin I.V."/>
            <person name="Lareau L.F."/>
            <person name="Lazarevic D."/>
            <person name="Lipovich L."/>
            <person name="Liu J."/>
            <person name="Liuni S."/>
            <person name="McWilliam S."/>
            <person name="Madan Babu M."/>
            <person name="Madera M."/>
            <person name="Marchionni L."/>
            <person name="Matsuda H."/>
            <person name="Matsuzawa S."/>
            <person name="Miki H."/>
            <person name="Mignone F."/>
            <person name="Miyake S."/>
            <person name="Morris K."/>
            <person name="Mottagui-Tabar S."/>
            <person name="Mulder N."/>
            <person name="Nakano N."/>
            <person name="Nakauchi H."/>
            <person name="Ng P."/>
            <person name="Nilsson R."/>
            <person name="Nishiguchi S."/>
            <person name="Nishikawa S."/>
            <person name="Nori F."/>
            <person name="Ohara O."/>
            <person name="Okazaki Y."/>
            <person name="Orlando V."/>
            <person name="Pang K.C."/>
            <person name="Pavan W.J."/>
            <person name="Pavesi G."/>
            <person name="Pesole G."/>
            <person name="Petrovsky N."/>
            <person name="Piazza S."/>
            <person name="Reed J."/>
            <person name="Reid J.F."/>
            <person name="Ring B.Z."/>
            <person name="Ringwald M."/>
            <person name="Rost B."/>
            <person name="Ruan Y."/>
            <person name="Salzberg S.L."/>
            <person name="Sandelin A."/>
            <person name="Schneider C."/>
            <person name="Schoenbach C."/>
            <person name="Sekiguchi K."/>
            <person name="Semple C.A."/>
            <person name="Seno S."/>
            <person name="Sessa L."/>
            <person name="Sheng Y."/>
            <person name="Shibata Y."/>
            <person name="Shimada H."/>
            <person name="Shimada K."/>
            <person name="Silva D."/>
            <person name="Sinclair B."/>
            <person name="Sperling S."/>
            <person name="Stupka E."/>
            <person name="Sugiura K."/>
            <person name="Sultana R."/>
            <person name="Takenaka Y."/>
            <person name="Taki K."/>
            <person name="Tammoja K."/>
            <person name="Tan S.L."/>
            <person name="Tang S."/>
            <person name="Taylor M.S."/>
            <person name="Tegner J."/>
            <person name="Teichmann S.A."/>
            <person name="Ueda H.R."/>
            <person name="van Nimwegen E."/>
            <person name="Verardo R."/>
            <person name="Wei C.L."/>
            <person name="Yagi K."/>
            <person name="Yamanishi H."/>
            <person name="Zabarovsky E."/>
            <person name="Zhu S."/>
            <person name="Zimmer A."/>
            <person name="Hide W."/>
            <person name="Bult C."/>
            <person name="Grimmond S.M."/>
            <person name="Teasdale R.D."/>
            <person name="Liu E.T."/>
            <person name="Brusic V."/>
            <person name="Quackenbush J."/>
            <person name="Wahlestedt C."/>
            <person name="Mattick J.S."/>
            <person name="Hume D.A."/>
            <person name="Kai C."/>
            <person name="Sasaki D."/>
            <person name="Tomaru Y."/>
            <person name="Fukuda S."/>
            <person name="Kanamori-Katayama M."/>
            <person name="Suzuki M."/>
            <person name="Aoki J."/>
            <person name="Arakawa T."/>
            <person name="Iida J."/>
            <person name="Imamura K."/>
            <person name="Itoh M."/>
            <person name="Kato T."/>
            <person name="Kawaji H."/>
            <person name="Kawagashira N."/>
            <person name="Kawashima T."/>
            <person name="Kojima M."/>
            <person name="Kondo S."/>
            <person name="Konno H."/>
            <person name="Nakano K."/>
            <person name="Ninomiya N."/>
            <person name="Nishio T."/>
            <person name="Okada M."/>
            <person name="Plessy C."/>
            <person name="Shibata K."/>
            <person name="Shiraki T."/>
            <person name="Suzuki S."/>
            <person name="Tagami M."/>
            <person name="Waki K."/>
            <person name="Watahiki A."/>
            <person name="Okamura-Oho Y."/>
            <person name="Suzuki H."/>
            <person name="Kawai J."/>
            <person name="Hayashizaki Y."/>
        </authorList>
    </citation>
    <scope>NUCLEOTIDE SEQUENCE [LARGE SCALE MRNA]</scope>
    <source>
        <strain>C57BL/6J</strain>
        <tissue>Testis</tissue>
    </source>
</reference>
<reference key="4">
    <citation type="journal article" date="2009" name="PLoS Biol.">
        <title>Lineage-specific biology revealed by a finished genome assembly of the mouse.</title>
        <authorList>
            <person name="Church D.M."/>
            <person name="Goodstadt L."/>
            <person name="Hillier L.W."/>
            <person name="Zody M.C."/>
            <person name="Goldstein S."/>
            <person name="She X."/>
            <person name="Bult C.J."/>
            <person name="Agarwala R."/>
            <person name="Cherry J.L."/>
            <person name="DiCuccio M."/>
            <person name="Hlavina W."/>
            <person name="Kapustin Y."/>
            <person name="Meric P."/>
            <person name="Maglott D."/>
            <person name="Birtle Z."/>
            <person name="Marques A.C."/>
            <person name="Graves T."/>
            <person name="Zhou S."/>
            <person name="Teague B."/>
            <person name="Potamousis K."/>
            <person name="Churas C."/>
            <person name="Place M."/>
            <person name="Herschleb J."/>
            <person name="Runnheim R."/>
            <person name="Forrest D."/>
            <person name="Amos-Landgraf J."/>
            <person name="Schwartz D.C."/>
            <person name="Cheng Z."/>
            <person name="Lindblad-Toh K."/>
            <person name="Eichler E.E."/>
            <person name="Ponting C.P."/>
        </authorList>
    </citation>
    <scope>NUCLEOTIDE SEQUENCE [LARGE SCALE GENOMIC DNA]</scope>
    <source>
        <strain>C57BL/6J</strain>
    </source>
</reference>
<reference key="5">
    <citation type="submission" date="2005-07" db="EMBL/GenBank/DDBJ databases">
        <authorList>
            <person name="Mural R.J."/>
            <person name="Adams M.D."/>
            <person name="Myers E.W."/>
            <person name="Smith H.O."/>
            <person name="Venter J.C."/>
        </authorList>
    </citation>
    <scope>NUCLEOTIDE SEQUENCE [LARGE SCALE GENOMIC DNA]</scope>
</reference>
<reference key="6">
    <citation type="journal article" date="2004" name="Genome Res.">
        <title>The status, quality, and expansion of the NIH full-length cDNA project: the Mammalian Gene Collection (MGC).</title>
        <authorList>
            <consortium name="The MGC Project Team"/>
        </authorList>
    </citation>
    <scope>NUCLEOTIDE SEQUENCE [LARGE SCALE MRNA]</scope>
    <source>
        <strain>Czech II</strain>
        <tissue>Mammary tumor</tissue>
    </source>
</reference>
<reference key="7">
    <citation type="journal article" date="2010" name="Cell">
        <title>A tissue-specific atlas of mouse protein phosphorylation and expression.</title>
        <authorList>
            <person name="Huttlin E.L."/>
            <person name="Jedrychowski M.P."/>
            <person name="Elias J.E."/>
            <person name="Goswami T."/>
            <person name="Rad R."/>
            <person name="Beausoleil S.A."/>
            <person name="Villen J."/>
            <person name="Haas W."/>
            <person name="Sowa M.E."/>
            <person name="Gygi S.P."/>
        </authorList>
    </citation>
    <scope>IDENTIFICATION BY MASS SPECTROMETRY [LARGE SCALE ANALYSIS]</scope>
    <source>
        <tissue>Spleen</tissue>
        <tissue>Testis</tissue>
    </source>
</reference>
<reference key="8">
    <citation type="journal article" date="1997" name="Nature">
        <title>Structure of the cyclin-dependent kinase inhibitor p19Ink4d.</title>
        <authorList>
            <person name="Luh F.Y."/>
            <person name="Archer S.J."/>
            <person name="Domaille P.J."/>
            <person name="Smith B.O."/>
            <person name="Owen D."/>
            <person name="Brotherton D.H."/>
            <person name="Raine A.R."/>
            <person name="Xu X."/>
            <person name="Brizuela L."/>
            <person name="Brenner S.L."/>
            <person name="Laue E.D."/>
        </authorList>
    </citation>
    <scope>STRUCTURE BY NMR</scope>
</reference>
<gene>
    <name type="primary">Cdkn2d</name>
</gene>
<proteinExistence type="evidence at protein level"/>
<organism>
    <name type="scientific">Mus musculus</name>
    <name type="common">Mouse</name>
    <dbReference type="NCBI Taxonomy" id="10090"/>
    <lineage>
        <taxon>Eukaryota</taxon>
        <taxon>Metazoa</taxon>
        <taxon>Chordata</taxon>
        <taxon>Craniata</taxon>
        <taxon>Vertebrata</taxon>
        <taxon>Euteleostomi</taxon>
        <taxon>Mammalia</taxon>
        <taxon>Eutheria</taxon>
        <taxon>Euarchontoglires</taxon>
        <taxon>Glires</taxon>
        <taxon>Rodentia</taxon>
        <taxon>Myomorpha</taxon>
        <taxon>Muroidea</taxon>
        <taxon>Muridae</taxon>
        <taxon>Murinae</taxon>
        <taxon>Mus</taxon>
        <taxon>Mus</taxon>
    </lineage>
</organism>
<protein>
    <recommendedName>
        <fullName>Cyclin-dependent kinase 4 inhibitor D</fullName>
    </recommendedName>
    <alternativeName>
        <fullName>p19-INK4d</fullName>
    </alternativeName>
</protein>